<reference key="1">
    <citation type="journal article" date="2001" name="Proc. Natl. Acad. Sci. U.S.A.">
        <title>Genome sequence of an industrial microorganism Streptomyces avermitilis: deducing the ability of producing secondary metabolites.</title>
        <authorList>
            <person name="Omura S."/>
            <person name="Ikeda H."/>
            <person name="Ishikawa J."/>
            <person name="Hanamoto A."/>
            <person name="Takahashi C."/>
            <person name="Shinose M."/>
            <person name="Takahashi Y."/>
            <person name="Horikawa H."/>
            <person name="Nakazawa H."/>
            <person name="Osonoe T."/>
            <person name="Kikuchi H."/>
            <person name="Shiba T."/>
            <person name="Sakaki Y."/>
            <person name="Hattori M."/>
        </authorList>
    </citation>
    <scope>NUCLEOTIDE SEQUENCE [LARGE SCALE GENOMIC DNA]</scope>
    <source>
        <strain>ATCC 31267 / DSM 46492 / JCM 5070 / NBRC 14893 / NCIMB 12804 / NRRL 8165 / MA-4680</strain>
    </source>
</reference>
<reference key="2">
    <citation type="journal article" date="2003" name="Nat. Biotechnol.">
        <title>Complete genome sequence and comparative analysis of the industrial microorganism Streptomyces avermitilis.</title>
        <authorList>
            <person name="Ikeda H."/>
            <person name="Ishikawa J."/>
            <person name="Hanamoto A."/>
            <person name="Shinose M."/>
            <person name="Kikuchi H."/>
            <person name="Shiba T."/>
            <person name="Sakaki Y."/>
            <person name="Hattori M."/>
            <person name="Omura S."/>
        </authorList>
    </citation>
    <scope>NUCLEOTIDE SEQUENCE [LARGE SCALE GENOMIC DNA]</scope>
    <source>
        <strain>ATCC 31267 / DSM 46492 / JCM 5070 / NBRC 14893 / NCIMB 12804 / NRRL 8165 / MA-4680</strain>
    </source>
</reference>
<sequence>MSDSPRLTRRPEWTELEDHRAGPLLHPALRELFAADPERAERYVVRAGDLRLDYSKHLITDETLALLQELATATDVFGLRDAMFRGEKINVTENRAVLHTALRAPRDAVIEVDGENVVPAVHAVLDRMADFADRVRSGEWTGHTGSRIRTVVNIGIGGSDLGPAMAYEALRAFTDRSLTVRFVSNVDGADLHEAVRDLDPAETLFVIASKTFTTIETITNATSARSWLLAGLDGDEKAVAKHFVALSTNAGKVSDFGIDTANMFEFWDWVGGRYSFDSAIGLSLMIAIGPERFRELLDGFRIVDEHFRTAPAEANAPLLLGLLGVWYGSFFGAQSHAVLPYSHYLSKFTAYLQQLDMESNGKSVDRDGHPVEWQTGPVVWGTPGTNGQHAYYQLLHQGTKVIPADLIGFINPVDGLSDELAAQHDLLMANLFAQGQALAFGKTGDEVRAEGVPEEQVPHRTFRGNHPTTTILAAELTPSVLGQLIALYEHKVFVQGAIWNIDSFDQWGVELGKVLAKRVEPALTEGADVPGLDPSTAALVAAYRTHRKK</sequence>
<organism>
    <name type="scientific">Streptomyces avermitilis (strain ATCC 31267 / DSM 46492 / JCM 5070 / NBRC 14893 / NCIMB 12804 / NRRL 8165 / MA-4680)</name>
    <dbReference type="NCBI Taxonomy" id="227882"/>
    <lineage>
        <taxon>Bacteria</taxon>
        <taxon>Bacillati</taxon>
        <taxon>Actinomycetota</taxon>
        <taxon>Actinomycetes</taxon>
        <taxon>Kitasatosporales</taxon>
        <taxon>Streptomycetaceae</taxon>
        <taxon>Streptomyces</taxon>
    </lineage>
</organism>
<keyword id="KW-0963">Cytoplasm</keyword>
<keyword id="KW-0312">Gluconeogenesis</keyword>
<keyword id="KW-0324">Glycolysis</keyword>
<keyword id="KW-0413">Isomerase</keyword>
<keyword id="KW-1185">Reference proteome</keyword>
<comment type="function">
    <text evidence="1">Catalyzes the reversible isomerization of glucose-6-phosphate to fructose-6-phosphate.</text>
</comment>
<comment type="catalytic activity">
    <reaction evidence="1">
        <text>alpha-D-glucose 6-phosphate = beta-D-fructose 6-phosphate</text>
        <dbReference type="Rhea" id="RHEA:11816"/>
        <dbReference type="ChEBI" id="CHEBI:57634"/>
        <dbReference type="ChEBI" id="CHEBI:58225"/>
        <dbReference type="EC" id="5.3.1.9"/>
    </reaction>
</comment>
<comment type="pathway">
    <text evidence="1">Carbohydrate biosynthesis; gluconeogenesis.</text>
</comment>
<comment type="pathway">
    <text evidence="1">Carbohydrate degradation; glycolysis; D-glyceraldehyde 3-phosphate and glycerone phosphate from D-glucose: step 2/4.</text>
</comment>
<comment type="subcellular location">
    <subcellularLocation>
        <location evidence="1">Cytoplasm</location>
    </subcellularLocation>
</comment>
<comment type="similarity">
    <text evidence="1">Belongs to the GPI family.</text>
</comment>
<protein>
    <recommendedName>
        <fullName evidence="1">Glucose-6-phosphate isomerase 1</fullName>
        <shortName evidence="1">GPI 1</shortName>
        <ecNumber evidence="1">5.3.1.9</ecNumber>
    </recommendedName>
    <alternativeName>
        <fullName evidence="1">Phosphoglucose isomerase 1</fullName>
        <shortName evidence="1">PGI 1</shortName>
    </alternativeName>
    <alternativeName>
        <fullName evidence="1">Phosphohexose isomerase 1</fullName>
        <shortName evidence="1">PHI 1</shortName>
    </alternativeName>
</protein>
<accession>Q82M90</accession>
<gene>
    <name evidence="1" type="primary">pgi1</name>
    <name type="ordered locus">SAV_1770</name>
</gene>
<dbReference type="EC" id="5.3.1.9" evidence="1"/>
<dbReference type="EMBL" id="BA000030">
    <property type="protein sequence ID" value="BAC69481.1"/>
    <property type="molecule type" value="Genomic_DNA"/>
</dbReference>
<dbReference type="SMR" id="Q82M90"/>
<dbReference type="GeneID" id="41538871"/>
<dbReference type="KEGG" id="sma:SAVERM_1770"/>
<dbReference type="eggNOG" id="COG0166">
    <property type="taxonomic scope" value="Bacteria"/>
</dbReference>
<dbReference type="HOGENOM" id="CLU_017947_3_1_11"/>
<dbReference type="OrthoDB" id="140919at2"/>
<dbReference type="UniPathway" id="UPA00109">
    <property type="reaction ID" value="UER00181"/>
</dbReference>
<dbReference type="UniPathway" id="UPA00138"/>
<dbReference type="Proteomes" id="UP000000428">
    <property type="component" value="Chromosome"/>
</dbReference>
<dbReference type="GO" id="GO:0005829">
    <property type="term" value="C:cytosol"/>
    <property type="evidence" value="ECO:0007669"/>
    <property type="project" value="TreeGrafter"/>
</dbReference>
<dbReference type="GO" id="GO:0097367">
    <property type="term" value="F:carbohydrate derivative binding"/>
    <property type="evidence" value="ECO:0007669"/>
    <property type="project" value="InterPro"/>
</dbReference>
<dbReference type="GO" id="GO:0004347">
    <property type="term" value="F:glucose-6-phosphate isomerase activity"/>
    <property type="evidence" value="ECO:0007669"/>
    <property type="project" value="UniProtKB-UniRule"/>
</dbReference>
<dbReference type="GO" id="GO:0048029">
    <property type="term" value="F:monosaccharide binding"/>
    <property type="evidence" value="ECO:0007669"/>
    <property type="project" value="TreeGrafter"/>
</dbReference>
<dbReference type="GO" id="GO:0006094">
    <property type="term" value="P:gluconeogenesis"/>
    <property type="evidence" value="ECO:0007669"/>
    <property type="project" value="UniProtKB-UniRule"/>
</dbReference>
<dbReference type="GO" id="GO:0051156">
    <property type="term" value="P:glucose 6-phosphate metabolic process"/>
    <property type="evidence" value="ECO:0007669"/>
    <property type="project" value="TreeGrafter"/>
</dbReference>
<dbReference type="GO" id="GO:0006096">
    <property type="term" value="P:glycolytic process"/>
    <property type="evidence" value="ECO:0007669"/>
    <property type="project" value="UniProtKB-UniRule"/>
</dbReference>
<dbReference type="CDD" id="cd05015">
    <property type="entry name" value="SIS_PGI_1"/>
    <property type="match status" value="1"/>
</dbReference>
<dbReference type="CDD" id="cd05016">
    <property type="entry name" value="SIS_PGI_2"/>
    <property type="match status" value="1"/>
</dbReference>
<dbReference type="FunFam" id="1.10.1390.10:FF:000001">
    <property type="entry name" value="Glucose-6-phosphate isomerase"/>
    <property type="match status" value="1"/>
</dbReference>
<dbReference type="FunFam" id="3.40.50.10490:FF:000018">
    <property type="entry name" value="Glucose-6-phosphate isomerase"/>
    <property type="match status" value="1"/>
</dbReference>
<dbReference type="Gene3D" id="1.10.1390.10">
    <property type="match status" value="1"/>
</dbReference>
<dbReference type="Gene3D" id="3.40.50.10490">
    <property type="entry name" value="Glucose-6-phosphate isomerase like protein, domain 1"/>
    <property type="match status" value="2"/>
</dbReference>
<dbReference type="HAMAP" id="MF_00473">
    <property type="entry name" value="G6P_isomerase"/>
    <property type="match status" value="1"/>
</dbReference>
<dbReference type="InterPro" id="IPR001672">
    <property type="entry name" value="G6P_Isomerase"/>
</dbReference>
<dbReference type="InterPro" id="IPR023096">
    <property type="entry name" value="G6P_Isomerase_C"/>
</dbReference>
<dbReference type="InterPro" id="IPR018189">
    <property type="entry name" value="Phosphoglucose_isomerase_CS"/>
</dbReference>
<dbReference type="InterPro" id="IPR046348">
    <property type="entry name" value="SIS_dom_sf"/>
</dbReference>
<dbReference type="InterPro" id="IPR035476">
    <property type="entry name" value="SIS_PGI_1"/>
</dbReference>
<dbReference type="InterPro" id="IPR035482">
    <property type="entry name" value="SIS_PGI_2"/>
</dbReference>
<dbReference type="NCBIfam" id="NF001211">
    <property type="entry name" value="PRK00179.1"/>
    <property type="match status" value="1"/>
</dbReference>
<dbReference type="PANTHER" id="PTHR11469">
    <property type="entry name" value="GLUCOSE-6-PHOSPHATE ISOMERASE"/>
    <property type="match status" value="1"/>
</dbReference>
<dbReference type="PANTHER" id="PTHR11469:SF1">
    <property type="entry name" value="GLUCOSE-6-PHOSPHATE ISOMERASE"/>
    <property type="match status" value="1"/>
</dbReference>
<dbReference type="Pfam" id="PF00342">
    <property type="entry name" value="PGI"/>
    <property type="match status" value="1"/>
</dbReference>
<dbReference type="PRINTS" id="PR00662">
    <property type="entry name" value="G6PISOMERASE"/>
</dbReference>
<dbReference type="SUPFAM" id="SSF53697">
    <property type="entry name" value="SIS domain"/>
    <property type="match status" value="1"/>
</dbReference>
<dbReference type="PROSITE" id="PS00765">
    <property type="entry name" value="P_GLUCOSE_ISOMERASE_1"/>
    <property type="match status" value="1"/>
</dbReference>
<dbReference type="PROSITE" id="PS00174">
    <property type="entry name" value="P_GLUCOSE_ISOMERASE_2"/>
    <property type="match status" value="1"/>
</dbReference>
<dbReference type="PROSITE" id="PS51463">
    <property type="entry name" value="P_GLUCOSE_ISOMERASE_3"/>
    <property type="match status" value="1"/>
</dbReference>
<evidence type="ECO:0000255" key="1">
    <source>
        <dbReference type="HAMAP-Rule" id="MF_00473"/>
    </source>
</evidence>
<name>G6PI1_STRAW</name>
<feature type="chain" id="PRO_0000180747" description="Glucose-6-phosphate isomerase 1">
    <location>
        <begin position="1"/>
        <end position="549"/>
    </location>
</feature>
<feature type="active site" description="Proton donor" evidence="1">
    <location>
        <position position="358"/>
    </location>
</feature>
<feature type="active site" evidence="1">
    <location>
        <position position="389"/>
    </location>
</feature>
<feature type="active site" evidence="1">
    <location>
        <position position="513"/>
    </location>
</feature>
<proteinExistence type="inferred from homology"/>